<name>HUTH_SALHS</name>
<keyword id="KW-0963">Cytoplasm</keyword>
<keyword id="KW-0369">Histidine metabolism</keyword>
<keyword id="KW-0456">Lyase</keyword>
<sequence>MNTMTLTPGQLSLSQLYDVWRHPVQLRLDASAIDGINASVACVNDIVAEGRTAYGINTGFGLLAQTRIADEDLQNLQRSLVLSHAAGVGDPLDDAMVRLIMVLKINSLARGFSGIRLSVIEALIALVNAGVYPLIPAKGSVGASGDLAPLAHLSLTLLGEGKARWQGEWLPAQTALKKAGLEPVALAAKEGLALLNGTQASTAFALRGLFEAQELFASAVVCGALTTEAVLGSRRPFDARIHAARGQQGQIDVARLFRHLLTDTSAIAESHHHCHKVQDPYSLRCQPQVMGACLTQLRQTKEVLLAEANAVSDNPLVFADAGEVISGGNFHAEPVAMAADNLALAIAEIGALSERRIALMMDKHMSQLPPFLVKNGGVNSGFMIAQVTAAALASENKALAHPHSVDSLPTSANQEDHVSMAPAAGRRLWEMAANTRGIIAVEWLAACQGIDLREGLTSSPLLEQARQTLREQVAHYTQDRFFAPDIECATALLAQGALQRLVPDFM</sequence>
<dbReference type="EC" id="4.3.1.3" evidence="1"/>
<dbReference type="EMBL" id="CP001120">
    <property type="protein sequence ID" value="ACF68853.1"/>
    <property type="molecule type" value="Genomic_DNA"/>
</dbReference>
<dbReference type="RefSeq" id="WP_001095241.1">
    <property type="nucleotide sequence ID" value="NC_011083.1"/>
</dbReference>
<dbReference type="SMR" id="B4TC45"/>
<dbReference type="KEGG" id="seh:SeHA_C0918"/>
<dbReference type="HOGENOM" id="CLU_014801_4_0_6"/>
<dbReference type="UniPathway" id="UPA00379">
    <property type="reaction ID" value="UER00549"/>
</dbReference>
<dbReference type="Proteomes" id="UP000001866">
    <property type="component" value="Chromosome"/>
</dbReference>
<dbReference type="GO" id="GO:0005737">
    <property type="term" value="C:cytoplasm"/>
    <property type="evidence" value="ECO:0007669"/>
    <property type="project" value="UniProtKB-SubCell"/>
</dbReference>
<dbReference type="GO" id="GO:0004397">
    <property type="term" value="F:histidine ammonia-lyase activity"/>
    <property type="evidence" value="ECO:0007669"/>
    <property type="project" value="UniProtKB-UniRule"/>
</dbReference>
<dbReference type="GO" id="GO:0019556">
    <property type="term" value="P:L-histidine catabolic process to glutamate and formamide"/>
    <property type="evidence" value="ECO:0007669"/>
    <property type="project" value="UniProtKB-UniPathway"/>
</dbReference>
<dbReference type="GO" id="GO:0019557">
    <property type="term" value="P:L-histidine catabolic process to glutamate and formate"/>
    <property type="evidence" value="ECO:0007669"/>
    <property type="project" value="UniProtKB-UniPathway"/>
</dbReference>
<dbReference type="CDD" id="cd00332">
    <property type="entry name" value="PAL-HAL"/>
    <property type="match status" value="1"/>
</dbReference>
<dbReference type="FunFam" id="1.10.275.10:FF:000005">
    <property type="entry name" value="Histidine ammonia-lyase"/>
    <property type="match status" value="1"/>
</dbReference>
<dbReference type="FunFam" id="1.20.200.10:FF:000003">
    <property type="entry name" value="Histidine ammonia-lyase"/>
    <property type="match status" value="1"/>
</dbReference>
<dbReference type="Gene3D" id="1.20.200.10">
    <property type="entry name" value="Fumarase/aspartase (Central domain)"/>
    <property type="match status" value="1"/>
</dbReference>
<dbReference type="Gene3D" id="1.10.275.10">
    <property type="entry name" value="Fumarase/aspartase (N-terminal domain)"/>
    <property type="match status" value="1"/>
</dbReference>
<dbReference type="HAMAP" id="MF_00229">
    <property type="entry name" value="His_ammonia_lyase"/>
    <property type="match status" value="1"/>
</dbReference>
<dbReference type="InterPro" id="IPR001106">
    <property type="entry name" value="Aromatic_Lyase"/>
</dbReference>
<dbReference type="InterPro" id="IPR024083">
    <property type="entry name" value="Fumarase/histidase_N"/>
</dbReference>
<dbReference type="InterPro" id="IPR005921">
    <property type="entry name" value="HutH"/>
</dbReference>
<dbReference type="InterPro" id="IPR008948">
    <property type="entry name" value="L-Aspartase-like"/>
</dbReference>
<dbReference type="InterPro" id="IPR022313">
    <property type="entry name" value="Phe/His_NH3-lyase_AS"/>
</dbReference>
<dbReference type="NCBIfam" id="TIGR01225">
    <property type="entry name" value="hutH"/>
    <property type="match status" value="1"/>
</dbReference>
<dbReference type="NCBIfam" id="NF006871">
    <property type="entry name" value="PRK09367.1"/>
    <property type="match status" value="1"/>
</dbReference>
<dbReference type="PANTHER" id="PTHR10362">
    <property type="entry name" value="HISTIDINE AMMONIA-LYASE"/>
    <property type="match status" value="1"/>
</dbReference>
<dbReference type="Pfam" id="PF00221">
    <property type="entry name" value="Lyase_aromatic"/>
    <property type="match status" value="1"/>
</dbReference>
<dbReference type="SUPFAM" id="SSF48557">
    <property type="entry name" value="L-aspartase-like"/>
    <property type="match status" value="1"/>
</dbReference>
<dbReference type="PROSITE" id="PS00488">
    <property type="entry name" value="PAL_HISTIDASE"/>
    <property type="match status" value="1"/>
</dbReference>
<reference key="1">
    <citation type="journal article" date="2011" name="J. Bacteriol.">
        <title>Comparative genomics of 28 Salmonella enterica isolates: evidence for CRISPR-mediated adaptive sublineage evolution.</title>
        <authorList>
            <person name="Fricke W.F."/>
            <person name="Mammel M.K."/>
            <person name="McDermott P.F."/>
            <person name="Tartera C."/>
            <person name="White D.G."/>
            <person name="Leclerc J.E."/>
            <person name="Ravel J."/>
            <person name="Cebula T.A."/>
        </authorList>
    </citation>
    <scope>NUCLEOTIDE SEQUENCE [LARGE SCALE GENOMIC DNA]</scope>
    <source>
        <strain>SL476</strain>
    </source>
</reference>
<comment type="catalytic activity">
    <reaction evidence="1">
        <text>L-histidine = trans-urocanate + NH4(+)</text>
        <dbReference type="Rhea" id="RHEA:21232"/>
        <dbReference type="ChEBI" id="CHEBI:17771"/>
        <dbReference type="ChEBI" id="CHEBI:28938"/>
        <dbReference type="ChEBI" id="CHEBI:57595"/>
        <dbReference type="EC" id="4.3.1.3"/>
    </reaction>
</comment>
<comment type="pathway">
    <text evidence="1">Amino-acid degradation; L-histidine degradation into L-glutamate; N-formimidoyl-L-glutamate from L-histidine: step 1/3.</text>
</comment>
<comment type="subcellular location">
    <subcellularLocation>
        <location evidence="1">Cytoplasm</location>
    </subcellularLocation>
</comment>
<comment type="PTM">
    <text evidence="1">Contains an active site 4-methylidene-imidazol-5-one (MIO), which is formed autocatalytically by cyclization and dehydration of residues Ala-Ser-Gly.</text>
</comment>
<comment type="similarity">
    <text evidence="1">Belongs to the PAL/histidase family.</text>
</comment>
<gene>
    <name evidence="1" type="primary">hutH</name>
    <name type="ordered locus">SeHA_C0918</name>
</gene>
<proteinExistence type="inferred from homology"/>
<organism>
    <name type="scientific">Salmonella heidelberg (strain SL476)</name>
    <dbReference type="NCBI Taxonomy" id="454169"/>
    <lineage>
        <taxon>Bacteria</taxon>
        <taxon>Pseudomonadati</taxon>
        <taxon>Pseudomonadota</taxon>
        <taxon>Gammaproteobacteria</taxon>
        <taxon>Enterobacterales</taxon>
        <taxon>Enterobacteriaceae</taxon>
        <taxon>Salmonella</taxon>
    </lineage>
</organism>
<protein>
    <recommendedName>
        <fullName evidence="1">Histidine ammonia-lyase</fullName>
        <shortName evidence="1">Histidase</shortName>
        <ecNumber evidence="1">4.3.1.3</ecNumber>
    </recommendedName>
</protein>
<feature type="chain" id="PRO_1000100450" description="Histidine ammonia-lyase">
    <location>
        <begin position="1"/>
        <end position="506"/>
    </location>
</feature>
<feature type="modified residue" description="2,3-didehydroalanine (Ser)" evidence="1">
    <location>
        <position position="144"/>
    </location>
</feature>
<feature type="cross-link" description="5-imidazolinone (Ala-Gly)" evidence="1">
    <location>
        <begin position="143"/>
        <end position="145"/>
    </location>
</feature>
<accession>B4TC45</accession>
<evidence type="ECO:0000255" key="1">
    <source>
        <dbReference type="HAMAP-Rule" id="MF_00229"/>
    </source>
</evidence>